<keyword id="KW-1185">Reference proteome</keyword>
<keyword id="KW-0687">Ribonucleoprotein</keyword>
<keyword id="KW-0689">Ribosomal protein</keyword>
<keyword id="KW-0694">RNA-binding</keyword>
<keyword id="KW-0699">rRNA-binding</keyword>
<sequence length="124" mass="14150">MRHYEIVFMVHPDQSEQVPAMIERYTASVTEAGGQVHRLEDWGRRQLAYPINKLHKAHYVLMNVEAPKSVIDELETNFRYNDAVLRNLIVHTKAAVKEASLMAKAKESKTTEVVAEVESKEASE</sequence>
<gene>
    <name evidence="1" type="primary">rpsF</name>
    <name type="ordered locus">HD_1045</name>
</gene>
<name>RS6_HAEDU</name>
<reference key="1">
    <citation type="submission" date="2003-06" db="EMBL/GenBank/DDBJ databases">
        <title>The complete genome sequence of Haemophilus ducreyi.</title>
        <authorList>
            <person name="Munson R.S. Jr."/>
            <person name="Ray W.C."/>
            <person name="Mahairas G."/>
            <person name="Sabo P."/>
            <person name="Mungur R."/>
            <person name="Johnson L."/>
            <person name="Nguyen D."/>
            <person name="Wang J."/>
            <person name="Forst C."/>
            <person name="Hood L."/>
        </authorList>
    </citation>
    <scope>NUCLEOTIDE SEQUENCE [LARGE SCALE GENOMIC DNA]</scope>
    <source>
        <strain>35000HP / ATCC 700724</strain>
    </source>
</reference>
<dbReference type="EMBL" id="AE017143">
    <property type="protein sequence ID" value="AAP95919.1"/>
    <property type="molecule type" value="Genomic_DNA"/>
</dbReference>
<dbReference type="RefSeq" id="WP_010944969.1">
    <property type="nucleotide sequence ID" value="NC_002940.2"/>
</dbReference>
<dbReference type="SMR" id="Q7VMD7"/>
<dbReference type="STRING" id="233412.HD_1045"/>
<dbReference type="KEGG" id="hdu:HD_1045"/>
<dbReference type="eggNOG" id="COG0360">
    <property type="taxonomic scope" value="Bacteria"/>
</dbReference>
<dbReference type="HOGENOM" id="CLU_113441_6_1_6"/>
<dbReference type="OrthoDB" id="9812702at2"/>
<dbReference type="Proteomes" id="UP000001022">
    <property type="component" value="Chromosome"/>
</dbReference>
<dbReference type="GO" id="GO:0022627">
    <property type="term" value="C:cytosolic small ribosomal subunit"/>
    <property type="evidence" value="ECO:0007669"/>
    <property type="project" value="TreeGrafter"/>
</dbReference>
<dbReference type="GO" id="GO:0070181">
    <property type="term" value="F:small ribosomal subunit rRNA binding"/>
    <property type="evidence" value="ECO:0007669"/>
    <property type="project" value="TreeGrafter"/>
</dbReference>
<dbReference type="GO" id="GO:0003735">
    <property type="term" value="F:structural constituent of ribosome"/>
    <property type="evidence" value="ECO:0007669"/>
    <property type="project" value="InterPro"/>
</dbReference>
<dbReference type="GO" id="GO:0006412">
    <property type="term" value="P:translation"/>
    <property type="evidence" value="ECO:0007669"/>
    <property type="project" value="UniProtKB-UniRule"/>
</dbReference>
<dbReference type="CDD" id="cd00473">
    <property type="entry name" value="bS6"/>
    <property type="match status" value="1"/>
</dbReference>
<dbReference type="FunFam" id="3.30.70.60:FF:000003">
    <property type="entry name" value="30S ribosomal protein S6"/>
    <property type="match status" value="1"/>
</dbReference>
<dbReference type="Gene3D" id="3.30.70.60">
    <property type="match status" value="1"/>
</dbReference>
<dbReference type="HAMAP" id="MF_00360">
    <property type="entry name" value="Ribosomal_bS6"/>
    <property type="match status" value="1"/>
</dbReference>
<dbReference type="InterPro" id="IPR000529">
    <property type="entry name" value="Ribosomal_bS6"/>
</dbReference>
<dbReference type="InterPro" id="IPR020815">
    <property type="entry name" value="Ribosomal_bS6_CS"/>
</dbReference>
<dbReference type="InterPro" id="IPR035980">
    <property type="entry name" value="Ribosomal_bS6_sf"/>
</dbReference>
<dbReference type="InterPro" id="IPR020814">
    <property type="entry name" value="Ribosomal_S6_plastid/chlpt"/>
</dbReference>
<dbReference type="InterPro" id="IPR014717">
    <property type="entry name" value="Transl_elong_EF1B/ribsomal_bS6"/>
</dbReference>
<dbReference type="NCBIfam" id="TIGR00166">
    <property type="entry name" value="S6"/>
    <property type="match status" value="1"/>
</dbReference>
<dbReference type="PANTHER" id="PTHR21011">
    <property type="entry name" value="MITOCHONDRIAL 28S RIBOSOMAL PROTEIN S6"/>
    <property type="match status" value="1"/>
</dbReference>
<dbReference type="PANTHER" id="PTHR21011:SF1">
    <property type="entry name" value="SMALL RIBOSOMAL SUBUNIT PROTEIN BS6M"/>
    <property type="match status" value="1"/>
</dbReference>
<dbReference type="Pfam" id="PF01250">
    <property type="entry name" value="Ribosomal_S6"/>
    <property type="match status" value="1"/>
</dbReference>
<dbReference type="SUPFAM" id="SSF54995">
    <property type="entry name" value="Ribosomal protein S6"/>
    <property type="match status" value="1"/>
</dbReference>
<dbReference type="PROSITE" id="PS01048">
    <property type="entry name" value="RIBOSOMAL_S6"/>
    <property type="match status" value="1"/>
</dbReference>
<organism>
    <name type="scientific">Haemophilus ducreyi (strain 35000HP / ATCC 700724)</name>
    <dbReference type="NCBI Taxonomy" id="233412"/>
    <lineage>
        <taxon>Bacteria</taxon>
        <taxon>Pseudomonadati</taxon>
        <taxon>Pseudomonadota</taxon>
        <taxon>Gammaproteobacteria</taxon>
        <taxon>Pasteurellales</taxon>
        <taxon>Pasteurellaceae</taxon>
        <taxon>Haemophilus</taxon>
    </lineage>
</organism>
<protein>
    <recommendedName>
        <fullName evidence="1">Small ribosomal subunit protein bS6</fullName>
    </recommendedName>
    <alternativeName>
        <fullName evidence="2">30S ribosomal protein S6</fullName>
    </alternativeName>
</protein>
<proteinExistence type="inferred from homology"/>
<accession>Q7VMD7</accession>
<evidence type="ECO:0000255" key="1">
    <source>
        <dbReference type="HAMAP-Rule" id="MF_00360"/>
    </source>
</evidence>
<evidence type="ECO:0000305" key="2"/>
<comment type="function">
    <text evidence="1">Binds together with bS18 to 16S ribosomal RNA.</text>
</comment>
<comment type="similarity">
    <text evidence="1">Belongs to the bacterial ribosomal protein bS6 family.</text>
</comment>
<feature type="chain" id="PRO_0000176773" description="Small ribosomal subunit protein bS6">
    <location>
        <begin position="1"/>
        <end position="124"/>
    </location>
</feature>